<reference key="1">
    <citation type="journal article" date="2022" name="J. Infect. Dis.">
        <title>Exportation of Monkeypox virus from the African continent.</title>
        <authorList>
            <person name="Mauldin M.R."/>
            <person name="McCollum A.M."/>
            <person name="Nakazawa Y.J."/>
            <person name="Mandra A."/>
            <person name="Whitehouse E.R."/>
            <person name="Davidson W."/>
            <person name="Zhao H."/>
            <person name="Gao J."/>
            <person name="Li Y."/>
            <person name="Doty J."/>
            <person name="Yinka-Ogunleye A."/>
            <person name="Akinpelu A."/>
            <person name="Aruna O."/>
            <person name="Naidoo D."/>
            <person name="Lewandowski K."/>
            <person name="Afrough B."/>
            <person name="Graham V."/>
            <person name="Aarons E."/>
            <person name="Hewson R."/>
            <person name="Vipond R."/>
            <person name="Dunning J."/>
            <person name="Chand M."/>
            <person name="Brown C."/>
            <person name="Cohen-Gihon I."/>
            <person name="Erez N."/>
            <person name="Shifman O."/>
            <person name="Israeli O."/>
            <person name="Sharon M."/>
            <person name="Schwartz E."/>
            <person name="Beth-Din A."/>
            <person name="Zvi A."/>
            <person name="Mak T.M."/>
            <person name="Ng Y.K."/>
            <person name="Cui L."/>
            <person name="Lin R.T.P."/>
            <person name="Olson V.A."/>
            <person name="Brooks T."/>
            <person name="Paran N."/>
            <person name="Ihekweazu C."/>
            <person name="Reynolds M.G."/>
        </authorList>
    </citation>
    <scope>NUCLEOTIDE SEQUENCE [LARGE SCALE GENOMIC DNA]</scope>
    <source>
        <strain>MPXV-M5312_HM12_Rivers</strain>
    </source>
</reference>
<name>PG001_MONPV</name>
<accession>P0DTM9</accession>
<organism>
    <name type="scientific">Monkeypox virus</name>
    <dbReference type="NCBI Taxonomy" id="10244"/>
    <lineage>
        <taxon>Viruses</taxon>
        <taxon>Varidnaviria</taxon>
        <taxon>Bamfordvirae</taxon>
        <taxon>Nucleocytoviricota</taxon>
        <taxon>Pokkesviricetes</taxon>
        <taxon>Chitovirales</taxon>
        <taxon>Poxviridae</taxon>
        <taxon>Chordopoxvirinae</taxon>
        <taxon>Orthopoxvirus</taxon>
    </lineage>
</organism>
<feature type="chain" id="PRO_0000457182" description="Chemokine-binding protein">
    <location>
        <begin position="1"/>
        <end position="246"/>
    </location>
</feature>
<feature type="region of interest" description="Disordered" evidence="3">
    <location>
        <begin position="108"/>
        <end position="132"/>
    </location>
</feature>
<feature type="compositionally biased region" description="Polar residues" evidence="3">
    <location>
        <begin position="108"/>
        <end position="125"/>
    </location>
</feature>
<protein>
    <recommendedName>
        <fullName>Chemokine-binding protein</fullName>
        <shortName>vCKBP</shortName>
    </recommendedName>
</protein>
<gene>
    <name type="primary">OPG001</name>
    <name type="synonym">J1L</name>
    <name type="synonym">J3R</name>
    <name type="ORF">MPXVgp001</name>
</gene>
<comment type="function">
    <text evidence="1">Inhibits host immune defense by binding to host chemokines. Binds host CC chemokines (beta chemokines) such as RANTES with high affinity, but not CXC or C chemokines (alpha and gamma chemokines).</text>
</comment>
<comment type="subcellular location">
    <subcellularLocation>
        <location evidence="1">Secreted</location>
    </subcellularLocation>
</comment>
<comment type="induction">
    <text evidence="2">Expressed in the early phase of the viral replicative cycle.</text>
</comment>
<comment type="similarity">
    <text evidence="4">Belongs to the orthopoxvirus OPG001 family.</text>
</comment>
<keyword id="KW-0244">Early protein</keyword>
<keyword id="KW-0945">Host-virus interaction</keyword>
<keyword id="KW-1086">Inhibition of host chemokines by virus</keyword>
<keyword id="KW-1185">Reference proteome</keyword>
<keyword id="KW-0964">Secreted</keyword>
<keyword id="KW-0899">Viral immunoevasion</keyword>
<sequence>MKQYIVLACMCLVAAAMPTSLQQSSSSCTEEENKHHMGIDVIIKVTKQDQTPTNDKICQSVTEVTETEDDEVSEEVVKGDPTTYYTIVGAGLNMNFGFTKCPKISSISESSDGNTVNTRLSSVSPGQGKDSPAITREEALAMIKDCEMSIDIRCSEEEKDSDIKTHPVLGSNISHKKVSYKDIIGSTIVDTKCVKNLEFSVRIGDMCEESSELEVKDGFKYVDGSASEGATDDTSLIDSTKLKACV</sequence>
<organismHost>
    <name type="scientific">Cynomys gunnisoni</name>
    <name type="common">Gunnison's prairie dog</name>
    <name type="synonym">Spermophilus gunnisoni</name>
    <dbReference type="NCBI Taxonomy" id="45479"/>
</organismHost>
<organismHost>
    <name type="scientific">Cynomys leucurus</name>
    <name type="common">White-tailed prairie dog</name>
    <dbReference type="NCBI Taxonomy" id="99825"/>
</organismHost>
<organismHost>
    <name type="scientific">Cynomys ludovicianus</name>
    <name type="common">Black-tailed prairie dog</name>
    <dbReference type="NCBI Taxonomy" id="45480"/>
</organismHost>
<organismHost>
    <name type="scientific">Cynomys mexicanus</name>
    <name type="common">Mexican prairie dog</name>
    <dbReference type="NCBI Taxonomy" id="99826"/>
</organismHost>
<organismHost>
    <name type="scientific">Cynomys parvidens</name>
    <name type="common">Utah prairie dog</name>
    <dbReference type="NCBI Taxonomy" id="99827"/>
</organismHost>
<organismHost>
    <name type="scientific">Gliridae</name>
    <name type="common">dormice</name>
    <dbReference type="NCBI Taxonomy" id="30650"/>
</organismHost>
<organismHost>
    <name type="scientific">Heliosciurus ruwenzorii</name>
    <name type="common">Ruwenzori sun squirrel</name>
    <dbReference type="NCBI Taxonomy" id="226685"/>
</organismHost>
<organismHost>
    <name type="scientific">Homo sapiens</name>
    <name type="common">Human</name>
    <dbReference type="NCBI Taxonomy" id="9606"/>
</organismHost>
<organismHost>
    <name type="scientific">Mus musculus</name>
    <name type="common">Mouse</name>
    <dbReference type="NCBI Taxonomy" id="10090"/>
</organismHost>
<evidence type="ECO:0000250" key="1">
    <source>
        <dbReference type="UniProtKB" id="P19063"/>
    </source>
</evidence>
<evidence type="ECO:0000250" key="2">
    <source>
        <dbReference type="UniProtKB" id="Q805H7"/>
    </source>
</evidence>
<evidence type="ECO:0000256" key="3">
    <source>
        <dbReference type="SAM" id="MobiDB-lite"/>
    </source>
</evidence>
<evidence type="ECO:0000305" key="4"/>
<dbReference type="EMBL" id="MT903340">
    <property type="status" value="NOT_ANNOTATED_CDS"/>
    <property type="molecule type" value="Genomic_DNA"/>
</dbReference>
<dbReference type="RefSeq" id="NP_536428.1">
    <property type="nucleotide sequence ID" value="NC_003310.1"/>
</dbReference>
<dbReference type="RefSeq" id="NP_536618.1">
    <property type="nucleotide sequence ID" value="NC_003310.1"/>
</dbReference>
<dbReference type="RefSeq" id="YP_010377002.1">
    <property type="nucleotide sequence ID" value="NC_063383.1"/>
</dbReference>
<dbReference type="RefSeq" id="YP_010377182.1">
    <property type="nucleotide sequence ID" value="NC_063383.1"/>
</dbReference>
<dbReference type="SMR" id="P0DTM9"/>
<dbReference type="GeneID" id="72551595"/>
<dbReference type="GeneID" id="72551607"/>
<dbReference type="GeneID" id="928994"/>
<dbReference type="GeneID" id="929022"/>
<dbReference type="Proteomes" id="UP000516359">
    <property type="component" value="Genome"/>
</dbReference>
<dbReference type="GO" id="GO:0005576">
    <property type="term" value="C:extracellular region"/>
    <property type="evidence" value="ECO:0007669"/>
    <property type="project" value="UniProtKB-SubCell"/>
</dbReference>
<dbReference type="Gene3D" id="2.60.240.10">
    <property type="entry name" value="Major secreted virus protein"/>
    <property type="match status" value="1"/>
</dbReference>
<dbReference type="InterPro" id="IPR009173">
    <property type="entry name" value="Chemkine-bd_vir"/>
</dbReference>
<dbReference type="InterPro" id="IPR003184">
    <property type="entry name" value="Orthopox_35kDa"/>
</dbReference>
<dbReference type="InterPro" id="IPR036540">
    <property type="entry name" value="Pox_vCCI-like_sf"/>
</dbReference>
<dbReference type="Pfam" id="PF02250">
    <property type="entry name" value="Orthopox_35kD"/>
    <property type="match status" value="1"/>
</dbReference>
<dbReference type="PIRSF" id="PIRSF003696">
    <property type="entry name" value="VAC_C23L"/>
    <property type="match status" value="1"/>
</dbReference>
<dbReference type="SUPFAM" id="SSF49889">
    <property type="entry name" value="Soluble secreted chemokine inhibitor, VCCI"/>
    <property type="match status" value="1"/>
</dbReference>
<proteinExistence type="inferred from homology"/>